<evidence type="ECO:0000255" key="1">
    <source>
        <dbReference type="HAMAP-Rule" id="MF_01630"/>
    </source>
</evidence>
<evidence type="ECO:0000305" key="2"/>
<accession>Q89EN5</accession>
<accession>Q9F5L3</accession>
<organism>
    <name type="scientific">Bradyrhizobium diazoefficiens (strain JCM 10833 / BCRC 13528 / IAM 13628 / NBRC 14792 / USDA 110)</name>
    <dbReference type="NCBI Taxonomy" id="224911"/>
    <lineage>
        <taxon>Bacteria</taxon>
        <taxon>Pseudomonadati</taxon>
        <taxon>Pseudomonadota</taxon>
        <taxon>Alphaproteobacteria</taxon>
        <taxon>Hyphomicrobiales</taxon>
        <taxon>Nitrobacteraceae</taxon>
        <taxon>Bradyrhizobium</taxon>
    </lineage>
</organism>
<comment type="function">
    <text evidence="1">Catalytic subunit of the periplasmic nitrate reductase complex NapAB. Receives electrons from NapB and catalyzes the reduction of nitrate to nitrite.</text>
</comment>
<comment type="catalytic activity">
    <reaction evidence="1">
        <text>2 Fe(II)-[cytochrome] + nitrate + 2 H(+) = 2 Fe(III)-[cytochrome] + nitrite + H2O</text>
        <dbReference type="Rhea" id="RHEA:12909"/>
        <dbReference type="Rhea" id="RHEA-COMP:11777"/>
        <dbReference type="Rhea" id="RHEA-COMP:11778"/>
        <dbReference type="ChEBI" id="CHEBI:15377"/>
        <dbReference type="ChEBI" id="CHEBI:15378"/>
        <dbReference type="ChEBI" id="CHEBI:16301"/>
        <dbReference type="ChEBI" id="CHEBI:17632"/>
        <dbReference type="ChEBI" id="CHEBI:29033"/>
        <dbReference type="ChEBI" id="CHEBI:29034"/>
        <dbReference type="EC" id="1.9.6.1"/>
    </reaction>
</comment>
<comment type="cofactor">
    <cofactor evidence="1">
        <name>[4Fe-4S] cluster</name>
        <dbReference type="ChEBI" id="CHEBI:49883"/>
    </cofactor>
    <text evidence="1">Binds 1 [4Fe-4S] cluster.</text>
</comment>
<comment type="cofactor">
    <cofactor evidence="1">
        <name>Mo-bis(molybdopterin guanine dinucleotide)</name>
        <dbReference type="ChEBI" id="CHEBI:60539"/>
    </cofactor>
    <text evidence="1">Binds 1 molybdenum-bis(molybdopterin guanine dinucleotide) (Mo-bis-MGD) cofactor per subunit.</text>
</comment>
<comment type="subunit">
    <text evidence="1">Component of the periplasmic nitrate reductase NapAB complex composed of NapA and NapB.</text>
</comment>
<comment type="subcellular location">
    <subcellularLocation>
        <location evidence="1">Periplasm</location>
    </subcellularLocation>
</comment>
<comment type="PTM">
    <text evidence="1">Predicted to be exported by the Tat system. The position of the signal peptide cleavage has not been experimentally proven.</text>
</comment>
<comment type="similarity">
    <text evidence="1">Belongs to the prokaryotic molybdopterin-containing oxidoreductase family. NasA/NapA/NarB subfamily.</text>
</comment>
<gene>
    <name evidence="1" type="primary">napA</name>
    <name type="ordered locus">blr7038</name>
</gene>
<proteinExistence type="inferred from homology"/>
<sequence length="837" mass="94215">MTSPKLDRRQMLKLEAAAIAAAAAGLPVPALAANLATEREVSELKWDKAACRFCGTGCSVMVATKENRVVATHGDIKAEVNRGLNCVKGYFLSKIMYGHDRLTQPMLRKANGKYDKNGDFTPVSWTEAFDIMEVKWKEAMKKRGPNGVAMFGSGQWTIWEGYAASKLFKAGFRTNNIDPNARHCMASAVAGMMRTFGIDEPPGCYDDIEATDAFVLWGSNMAEMHPILWTRLTDRRLSAPHVRVAVLSTFEHRSFDLADIGMVFKPQTDLYLLNAIANHIIKTGRVNKDFVAAHTVFRRGQTDIGYGLRPEHPLQKKATGAAKANDSTDMSYDEYVKFVSEYTLEKAAEMSGVPLNRLEALAELYADPKTKVVSFWTMGFNQHTRGVWCNNLVYNIHLLTGKISSPGNSPFSLTGQPSACGTAREVGTFSHRLPADMVVTNKEHRTKAEHIWQLPEGTIPDKPGAHAVLQSRMLKDGLINAYWVQVNNNLQAGPNANEETYPGFRNPDNFIVVSDAYPSVTALAADLILPTAMWVEKEGAYGNAERRTQFWHQLVPAPGESKSDLWQLMEFSKRFKIEEVWPEELIAKKPEVRGKTLFDVLYKNGQVDKFPVSDIEQGYLNDESKAFGFYVHKGLFEEYASFGRGHGHDLAPFDAYHKERGLRWPVVNGQETRWRFREGSDPYVKQGTDVQFYGYPDGKARIFALPYEPAAESPDGEYPFWLSTGRVLEHWHSGTMTRRVPELYKAFPEAVCFMHPDDAQEAKIRRGDEVKVVSRRGFIRVRVETRGRDRPPRGLVFVPWFDESKLINKVTLDATDPISLQTDFKKCAVRIERVNVS</sequence>
<reference key="1">
    <citation type="journal article" date="2002" name="DNA Res.">
        <title>Complete genomic sequence of nitrogen-fixing symbiotic bacterium Bradyrhizobium japonicum USDA110.</title>
        <authorList>
            <person name="Kaneko T."/>
            <person name="Nakamura Y."/>
            <person name="Sato S."/>
            <person name="Minamisawa K."/>
            <person name="Uchiumi T."/>
            <person name="Sasamoto S."/>
            <person name="Watanabe A."/>
            <person name="Idesawa K."/>
            <person name="Iriguchi M."/>
            <person name="Kawashima K."/>
            <person name="Kohara M."/>
            <person name="Matsumoto M."/>
            <person name="Shimpo S."/>
            <person name="Tsuruoka H."/>
            <person name="Wada T."/>
            <person name="Yamada M."/>
            <person name="Tabata S."/>
        </authorList>
    </citation>
    <scope>NUCLEOTIDE SEQUENCE [LARGE SCALE GENOMIC DNA]</scope>
    <source>
        <strain>JCM 10833 / BCRC 13528 / IAM 13628 / NBRC 14792 / USDA 110</strain>
    </source>
</reference>
<reference key="2">
    <citation type="journal article" date="2003" name="Microbiology">
        <title>The Bradyrhizobium japonicum napEDABC genes encoding the periplasmic nitrate reductase are essential for nitrate respiration.</title>
        <authorList>
            <person name="Delgado M."/>
            <person name="Bonnard N."/>
            <person name="Tresierra-Ayala A."/>
            <person name="Bedmar E.J."/>
            <person name="Muller P."/>
        </authorList>
    </citation>
    <scope>NUCLEOTIDE SEQUENCE [GENOMIC DNA]</scope>
    <source>
        <strain>USDA 110spc4</strain>
    </source>
</reference>
<name>NAPA_BRADU</name>
<keyword id="KW-0004">4Fe-4S</keyword>
<keyword id="KW-0249">Electron transport</keyword>
<keyword id="KW-0408">Iron</keyword>
<keyword id="KW-0411">Iron-sulfur</keyword>
<keyword id="KW-0479">Metal-binding</keyword>
<keyword id="KW-0500">Molybdenum</keyword>
<keyword id="KW-0534">Nitrate assimilation</keyword>
<keyword id="KW-0560">Oxidoreductase</keyword>
<keyword id="KW-0574">Periplasm</keyword>
<keyword id="KW-1185">Reference proteome</keyword>
<keyword id="KW-0732">Signal</keyword>
<keyword id="KW-0813">Transport</keyword>
<feature type="signal peptide" description="Tat-type signal" evidence="1">
    <location>
        <begin position="1"/>
        <end position="32"/>
    </location>
</feature>
<feature type="chain" id="PRO_0000045979" description="Periplasmic nitrate reductase" evidence="1">
    <location>
        <begin position="33"/>
        <end position="837"/>
    </location>
</feature>
<feature type="domain" description="4Fe-4S Mo/W bis-MGD-type" evidence="1">
    <location>
        <begin position="44"/>
        <end position="100"/>
    </location>
</feature>
<feature type="binding site" evidence="1">
    <location>
        <position position="51"/>
    </location>
    <ligand>
        <name>[4Fe-4S] cluster</name>
        <dbReference type="ChEBI" id="CHEBI:49883"/>
    </ligand>
</feature>
<feature type="binding site" evidence="1">
    <location>
        <position position="54"/>
    </location>
    <ligand>
        <name>[4Fe-4S] cluster</name>
        <dbReference type="ChEBI" id="CHEBI:49883"/>
    </ligand>
</feature>
<feature type="binding site" evidence="1">
    <location>
        <position position="58"/>
    </location>
    <ligand>
        <name>[4Fe-4S] cluster</name>
        <dbReference type="ChEBI" id="CHEBI:49883"/>
    </ligand>
</feature>
<feature type="binding site" evidence="1">
    <location>
        <position position="86"/>
    </location>
    <ligand>
        <name>[4Fe-4S] cluster</name>
        <dbReference type="ChEBI" id="CHEBI:49883"/>
    </ligand>
</feature>
<feature type="binding site" evidence="1">
    <location>
        <position position="88"/>
    </location>
    <ligand>
        <name>Mo-bis(molybdopterin guanine dinucleotide)</name>
        <dbReference type="ChEBI" id="CHEBI:60539"/>
    </ligand>
</feature>
<feature type="binding site" evidence="1">
    <location>
        <position position="155"/>
    </location>
    <ligand>
        <name>Mo-bis(molybdopterin guanine dinucleotide)</name>
        <dbReference type="ChEBI" id="CHEBI:60539"/>
    </ligand>
</feature>
<feature type="binding site" evidence="1">
    <location>
        <position position="180"/>
    </location>
    <ligand>
        <name>Mo-bis(molybdopterin guanine dinucleotide)</name>
        <dbReference type="ChEBI" id="CHEBI:60539"/>
    </ligand>
</feature>
<feature type="binding site" evidence="1">
    <location>
        <position position="184"/>
    </location>
    <ligand>
        <name>Mo-bis(molybdopterin guanine dinucleotide)</name>
        <dbReference type="ChEBI" id="CHEBI:60539"/>
    </ligand>
</feature>
<feature type="binding site" evidence="1">
    <location>
        <begin position="217"/>
        <end position="224"/>
    </location>
    <ligand>
        <name>Mo-bis(molybdopterin guanine dinucleotide)</name>
        <dbReference type="ChEBI" id="CHEBI:60539"/>
    </ligand>
</feature>
<feature type="binding site" evidence="1">
    <location>
        <begin position="248"/>
        <end position="252"/>
    </location>
    <ligand>
        <name>Mo-bis(molybdopterin guanine dinucleotide)</name>
        <dbReference type="ChEBI" id="CHEBI:60539"/>
    </ligand>
</feature>
<feature type="binding site" evidence="1">
    <location>
        <begin position="267"/>
        <end position="269"/>
    </location>
    <ligand>
        <name>Mo-bis(molybdopterin guanine dinucleotide)</name>
        <dbReference type="ChEBI" id="CHEBI:60539"/>
    </ligand>
</feature>
<feature type="binding site" evidence="1">
    <location>
        <position position="378"/>
    </location>
    <ligand>
        <name>Mo-bis(molybdopterin guanine dinucleotide)</name>
        <dbReference type="ChEBI" id="CHEBI:60539"/>
    </ligand>
</feature>
<feature type="binding site" evidence="1">
    <location>
        <position position="382"/>
    </location>
    <ligand>
        <name>Mo-bis(molybdopterin guanine dinucleotide)</name>
        <dbReference type="ChEBI" id="CHEBI:60539"/>
    </ligand>
</feature>
<feature type="binding site" evidence="1">
    <location>
        <position position="488"/>
    </location>
    <ligand>
        <name>Mo-bis(molybdopterin guanine dinucleotide)</name>
        <dbReference type="ChEBI" id="CHEBI:60539"/>
    </ligand>
</feature>
<feature type="binding site" evidence="1">
    <location>
        <begin position="514"/>
        <end position="515"/>
    </location>
    <ligand>
        <name>Mo-bis(molybdopterin guanine dinucleotide)</name>
        <dbReference type="ChEBI" id="CHEBI:60539"/>
    </ligand>
</feature>
<feature type="binding site" evidence="1">
    <location>
        <position position="537"/>
    </location>
    <ligand>
        <name>Mo-bis(molybdopterin guanine dinucleotide)</name>
        <dbReference type="ChEBI" id="CHEBI:60539"/>
    </ligand>
</feature>
<feature type="binding site" evidence="1">
    <location>
        <position position="564"/>
    </location>
    <ligand>
        <name>Mo-bis(molybdopterin guanine dinucleotide)</name>
        <dbReference type="ChEBI" id="CHEBI:60539"/>
    </ligand>
</feature>
<feature type="binding site" evidence="1">
    <location>
        <begin position="724"/>
        <end position="733"/>
    </location>
    <ligand>
        <name>Mo-bis(molybdopterin guanine dinucleotide)</name>
        <dbReference type="ChEBI" id="CHEBI:60539"/>
    </ligand>
</feature>
<feature type="binding site" evidence="1">
    <location>
        <position position="800"/>
    </location>
    <ligand>
        <name>substrate</name>
    </ligand>
</feature>
<feature type="binding site" evidence="1">
    <location>
        <position position="808"/>
    </location>
    <ligand>
        <name>Mo-bis(molybdopterin guanine dinucleotide)</name>
        <dbReference type="ChEBI" id="CHEBI:60539"/>
    </ligand>
</feature>
<feature type="binding site" evidence="1">
    <location>
        <position position="825"/>
    </location>
    <ligand>
        <name>Mo-bis(molybdopterin guanine dinucleotide)</name>
        <dbReference type="ChEBI" id="CHEBI:60539"/>
    </ligand>
</feature>
<feature type="sequence conflict" description="In Ref. 2; AAG31648." evidence="2" ref="2">
    <original>K</original>
    <variation>N</variation>
    <location>
        <position position="282"/>
    </location>
</feature>
<feature type="sequence conflict" description="In Ref. 2; AAG31648." evidence="2" ref="2">
    <original>GL</original>
    <variation>RV</variation>
    <location>
        <begin position="307"/>
        <end position="308"/>
    </location>
</feature>
<feature type="sequence conflict" description="In Ref. 2." evidence="2" ref="2">
    <original>DSTDMS</original>
    <variation>RNDPRQD</variation>
    <location>
        <begin position="326"/>
        <end position="331"/>
    </location>
</feature>
<protein>
    <recommendedName>
        <fullName evidence="1">Periplasmic nitrate reductase</fullName>
        <ecNumber evidence="1">1.9.6.1</ecNumber>
    </recommendedName>
</protein>
<dbReference type="EC" id="1.9.6.1" evidence="1"/>
<dbReference type="EMBL" id="BA000040">
    <property type="protein sequence ID" value="BAC52303.1"/>
    <property type="molecule type" value="Genomic_DNA"/>
</dbReference>
<dbReference type="EMBL" id="AF314590">
    <property type="protein sequence ID" value="AAG31648.2"/>
    <property type="molecule type" value="Genomic_DNA"/>
</dbReference>
<dbReference type="RefSeq" id="NP_773678.1">
    <property type="nucleotide sequence ID" value="NC_004463.1"/>
</dbReference>
<dbReference type="RefSeq" id="WP_011089775.1">
    <property type="nucleotide sequence ID" value="NC_004463.1"/>
</dbReference>
<dbReference type="SMR" id="Q89EN5"/>
<dbReference type="FunCoup" id="Q89EN5">
    <property type="interactions" value="105"/>
</dbReference>
<dbReference type="STRING" id="224911.AAV28_32820"/>
<dbReference type="EnsemblBacteria" id="BAC52303">
    <property type="protein sequence ID" value="BAC52303"/>
    <property type="gene ID" value="BAC52303"/>
</dbReference>
<dbReference type="GeneID" id="46494002"/>
<dbReference type="KEGG" id="bja:blr7038"/>
<dbReference type="PATRIC" id="fig|224911.44.peg.7092"/>
<dbReference type="eggNOG" id="COG0243">
    <property type="taxonomic scope" value="Bacteria"/>
</dbReference>
<dbReference type="HOGENOM" id="CLU_000422_13_4_5"/>
<dbReference type="InParanoid" id="Q89EN5"/>
<dbReference type="OrthoDB" id="9816402at2"/>
<dbReference type="PhylomeDB" id="Q89EN5"/>
<dbReference type="BRENDA" id="1.9.6.1">
    <property type="organism ID" value="929"/>
</dbReference>
<dbReference type="Proteomes" id="UP000002526">
    <property type="component" value="Chromosome"/>
</dbReference>
<dbReference type="GO" id="GO:0016020">
    <property type="term" value="C:membrane"/>
    <property type="evidence" value="ECO:0000318"/>
    <property type="project" value="GO_Central"/>
</dbReference>
<dbReference type="GO" id="GO:0009325">
    <property type="term" value="C:nitrate reductase complex"/>
    <property type="evidence" value="ECO:0000318"/>
    <property type="project" value="GO_Central"/>
</dbReference>
<dbReference type="GO" id="GO:0042597">
    <property type="term" value="C:periplasmic space"/>
    <property type="evidence" value="ECO:0007669"/>
    <property type="project" value="UniProtKB-SubCell"/>
</dbReference>
<dbReference type="GO" id="GO:0051539">
    <property type="term" value="F:4 iron, 4 sulfur cluster binding"/>
    <property type="evidence" value="ECO:0007669"/>
    <property type="project" value="UniProtKB-KW"/>
</dbReference>
<dbReference type="GO" id="GO:0009055">
    <property type="term" value="F:electron transfer activity"/>
    <property type="evidence" value="ECO:0007669"/>
    <property type="project" value="UniProtKB-UniRule"/>
</dbReference>
<dbReference type="GO" id="GO:0005506">
    <property type="term" value="F:iron ion binding"/>
    <property type="evidence" value="ECO:0007669"/>
    <property type="project" value="UniProtKB-UniRule"/>
</dbReference>
<dbReference type="GO" id="GO:0030151">
    <property type="term" value="F:molybdenum ion binding"/>
    <property type="evidence" value="ECO:0000318"/>
    <property type="project" value="GO_Central"/>
</dbReference>
<dbReference type="GO" id="GO:0043546">
    <property type="term" value="F:molybdopterin cofactor binding"/>
    <property type="evidence" value="ECO:0007669"/>
    <property type="project" value="InterPro"/>
</dbReference>
<dbReference type="GO" id="GO:0050140">
    <property type="term" value="F:nitrate reductase (cytochrome) activity"/>
    <property type="evidence" value="ECO:0007669"/>
    <property type="project" value="UniProtKB-EC"/>
</dbReference>
<dbReference type="GO" id="GO:0008940">
    <property type="term" value="F:nitrate reductase activity"/>
    <property type="evidence" value="ECO:0000318"/>
    <property type="project" value="GO_Central"/>
</dbReference>
<dbReference type="GO" id="GO:0045333">
    <property type="term" value="P:cellular respiration"/>
    <property type="evidence" value="ECO:0007669"/>
    <property type="project" value="UniProtKB-ARBA"/>
</dbReference>
<dbReference type="GO" id="GO:0006777">
    <property type="term" value="P:Mo-molybdopterin cofactor biosynthetic process"/>
    <property type="evidence" value="ECO:0007669"/>
    <property type="project" value="UniProtKB-UniRule"/>
</dbReference>
<dbReference type="GO" id="GO:0042128">
    <property type="term" value="P:nitrate assimilation"/>
    <property type="evidence" value="ECO:0007669"/>
    <property type="project" value="UniProtKB-UniRule"/>
</dbReference>
<dbReference type="CDD" id="cd02791">
    <property type="entry name" value="MopB_CT_Nitrate-R-NapA-like"/>
    <property type="match status" value="1"/>
</dbReference>
<dbReference type="CDD" id="cd02754">
    <property type="entry name" value="MopB_Nitrate-R-NapA-like"/>
    <property type="match status" value="1"/>
</dbReference>
<dbReference type="FunFam" id="2.40.40.20:FF:000005">
    <property type="entry name" value="Periplasmic nitrate reductase"/>
    <property type="match status" value="1"/>
</dbReference>
<dbReference type="Gene3D" id="2.40.40.20">
    <property type="match status" value="1"/>
</dbReference>
<dbReference type="Gene3D" id="3.30.200.210">
    <property type="match status" value="1"/>
</dbReference>
<dbReference type="Gene3D" id="3.40.50.740">
    <property type="match status" value="1"/>
</dbReference>
<dbReference type="Gene3D" id="3.40.228.10">
    <property type="entry name" value="Dimethylsulfoxide Reductase, domain 2"/>
    <property type="match status" value="1"/>
</dbReference>
<dbReference type="HAMAP" id="MF_01630">
    <property type="entry name" value="Nitrate_reduct_NapA"/>
    <property type="match status" value="1"/>
</dbReference>
<dbReference type="InterPro" id="IPR009010">
    <property type="entry name" value="Asp_de-COase-like_dom_sf"/>
</dbReference>
<dbReference type="InterPro" id="IPR041957">
    <property type="entry name" value="CT_Nitrate-R-NapA-like"/>
</dbReference>
<dbReference type="InterPro" id="IPR006657">
    <property type="entry name" value="MoPterin_dinucl-bd_dom"/>
</dbReference>
<dbReference type="InterPro" id="IPR006656">
    <property type="entry name" value="Mopterin_OxRdtase"/>
</dbReference>
<dbReference type="InterPro" id="IPR006963">
    <property type="entry name" value="Mopterin_OxRdtase_4Fe-4S_dom"/>
</dbReference>
<dbReference type="InterPro" id="IPR027467">
    <property type="entry name" value="MopterinOxRdtase_cofactor_BS"/>
</dbReference>
<dbReference type="InterPro" id="IPR010051">
    <property type="entry name" value="Periplasm_NO3_reductase_lsu"/>
</dbReference>
<dbReference type="InterPro" id="IPR050123">
    <property type="entry name" value="Prok_molybdopt-oxidoreductase"/>
</dbReference>
<dbReference type="InterPro" id="IPR006311">
    <property type="entry name" value="TAT_signal"/>
</dbReference>
<dbReference type="NCBIfam" id="TIGR01706">
    <property type="entry name" value="NAPA"/>
    <property type="match status" value="1"/>
</dbReference>
<dbReference type="NCBIfam" id="NF010055">
    <property type="entry name" value="PRK13532.1"/>
    <property type="match status" value="1"/>
</dbReference>
<dbReference type="PANTHER" id="PTHR43105:SF11">
    <property type="entry name" value="PERIPLASMIC NITRATE REDUCTASE"/>
    <property type="match status" value="1"/>
</dbReference>
<dbReference type="PANTHER" id="PTHR43105">
    <property type="entry name" value="RESPIRATORY NITRATE REDUCTASE"/>
    <property type="match status" value="1"/>
</dbReference>
<dbReference type="Pfam" id="PF04879">
    <property type="entry name" value="Molybdop_Fe4S4"/>
    <property type="match status" value="1"/>
</dbReference>
<dbReference type="Pfam" id="PF00384">
    <property type="entry name" value="Molybdopterin"/>
    <property type="match status" value="1"/>
</dbReference>
<dbReference type="Pfam" id="PF01568">
    <property type="entry name" value="Molydop_binding"/>
    <property type="match status" value="1"/>
</dbReference>
<dbReference type="SMART" id="SM00926">
    <property type="entry name" value="Molybdop_Fe4S4"/>
    <property type="match status" value="1"/>
</dbReference>
<dbReference type="SUPFAM" id="SSF50692">
    <property type="entry name" value="ADC-like"/>
    <property type="match status" value="1"/>
</dbReference>
<dbReference type="SUPFAM" id="SSF53706">
    <property type="entry name" value="Formate dehydrogenase/DMSO reductase, domains 1-3"/>
    <property type="match status" value="1"/>
</dbReference>
<dbReference type="PROSITE" id="PS51669">
    <property type="entry name" value="4FE4S_MOW_BIS_MGD"/>
    <property type="match status" value="1"/>
</dbReference>
<dbReference type="PROSITE" id="PS00551">
    <property type="entry name" value="MOLYBDOPTERIN_PROK_1"/>
    <property type="match status" value="1"/>
</dbReference>
<dbReference type="PROSITE" id="PS51318">
    <property type="entry name" value="TAT"/>
    <property type="match status" value="1"/>
</dbReference>